<name>AN13C_XENTR</name>
<gene>
    <name type="primary">ankrd13c</name>
    <name type="ORF">TEgg059p16.1</name>
</gene>
<protein>
    <recommendedName>
        <fullName>Ankyrin repeat domain-containing protein 13C</fullName>
    </recommendedName>
</protein>
<organism>
    <name type="scientific">Xenopus tropicalis</name>
    <name type="common">Western clawed frog</name>
    <name type="synonym">Silurana tropicalis</name>
    <dbReference type="NCBI Taxonomy" id="8364"/>
    <lineage>
        <taxon>Eukaryota</taxon>
        <taxon>Metazoa</taxon>
        <taxon>Chordata</taxon>
        <taxon>Craniata</taxon>
        <taxon>Vertebrata</taxon>
        <taxon>Euteleostomi</taxon>
        <taxon>Amphibia</taxon>
        <taxon>Batrachia</taxon>
        <taxon>Anura</taxon>
        <taxon>Pipoidea</taxon>
        <taxon>Pipidae</taxon>
        <taxon>Xenopodinae</taxon>
        <taxon>Xenopus</taxon>
        <taxon>Silurana</taxon>
    </lineage>
</organism>
<evidence type="ECO:0000250" key="1"/>
<evidence type="ECO:0000256" key="2">
    <source>
        <dbReference type="SAM" id="MobiDB-lite"/>
    </source>
</evidence>
<dbReference type="EMBL" id="CR942477">
    <property type="protein sequence ID" value="CAJ81692.1"/>
    <property type="molecule type" value="mRNA"/>
</dbReference>
<dbReference type="EMBL" id="BC123102">
    <property type="protein sequence ID" value="AAI23103.1"/>
    <property type="molecule type" value="mRNA"/>
</dbReference>
<dbReference type="RefSeq" id="NP_001039126.1">
    <property type="nucleotide sequence ID" value="NM_001045661.1"/>
</dbReference>
<dbReference type="SMR" id="Q28C34"/>
<dbReference type="FunCoup" id="Q28C34">
    <property type="interactions" value="3657"/>
</dbReference>
<dbReference type="PaxDb" id="8364-ENSXETP00000021179"/>
<dbReference type="GeneID" id="733949"/>
<dbReference type="KEGG" id="xtr:733949"/>
<dbReference type="AGR" id="Xenbase:XB-GENE-5828071"/>
<dbReference type="CTD" id="81573"/>
<dbReference type="Xenbase" id="XB-GENE-5828071">
    <property type="gene designation" value="ankrd13c"/>
</dbReference>
<dbReference type="eggNOG" id="KOG0522">
    <property type="taxonomic scope" value="Eukaryota"/>
</dbReference>
<dbReference type="InParanoid" id="Q28C34"/>
<dbReference type="OMA" id="FRYGEFE"/>
<dbReference type="OrthoDB" id="1585644at2759"/>
<dbReference type="Proteomes" id="UP000008143">
    <property type="component" value="Chromosome 4"/>
</dbReference>
<dbReference type="Bgee" id="ENSXETG00000009602">
    <property type="expression patterns" value="Expressed in 4-cell stage embryo and 12 other cell types or tissues"/>
</dbReference>
<dbReference type="GO" id="GO:0005789">
    <property type="term" value="C:endoplasmic reticulum membrane"/>
    <property type="evidence" value="ECO:0007669"/>
    <property type="project" value="UniProtKB-SubCell"/>
</dbReference>
<dbReference type="FunFam" id="1.25.40.20:FF:000073">
    <property type="entry name" value="Ankyrin repeat domain-containing protein 13C"/>
    <property type="match status" value="1"/>
</dbReference>
<dbReference type="Gene3D" id="1.25.40.20">
    <property type="entry name" value="Ankyrin repeat-containing domain"/>
    <property type="match status" value="1"/>
</dbReference>
<dbReference type="InterPro" id="IPR021832">
    <property type="entry name" value="ANKRD13"/>
</dbReference>
<dbReference type="InterPro" id="IPR055285">
    <property type="entry name" value="ANKRD13_C"/>
</dbReference>
<dbReference type="InterPro" id="IPR002110">
    <property type="entry name" value="Ankyrin_rpt"/>
</dbReference>
<dbReference type="InterPro" id="IPR036770">
    <property type="entry name" value="Ankyrin_rpt-contain_sf"/>
</dbReference>
<dbReference type="PANTHER" id="PTHR12447">
    <property type="entry name" value="ANKYRIN REPEAT DOMAIN-CONTAINING PROTEIN 13"/>
    <property type="match status" value="1"/>
</dbReference>
<dbReference type="PANTHER" id="PTHR12447:SF25">
    <property type="entry name" value="ANKYRIN REPEAT DOMAIN-CONTAINING PROTEIN 13C"/>
    <property type="match status" value="1"/>
</dbReference>
<dbReference type="Pfam" id="PF12796">
    <property type="entry name" value="Ank_2"/>
    <property type="match status" value="1"/>
</dbReference>
<dbReference type="Pfam" id="PF11904">
    <property type="entry name" value="ANKRD13_C"/>
    <property type="match status" value="1"/>
</dbReference>
<dbReference type="SMART" id="SM00248">
    <property type="entry name" value="ANK"/>
    <property type="match status" value="2"/>
</dbReference>
<dbReference type="SUPFAM" id="SSF48403">
    <property type="entry name" value="Ankyrin repeat"/>
    <property type="match status" value="1"/>
</dbReference>
<dbReference type="PROSITE" id="PS50297">
    <property type="entry name" value="ANK_REP_REGION"/>
    <property type="match status" value="1"/>
</dbReference>
<dbReference type="PROSITE" id="PS50088">
    <property type="entry name" value="ANK_REPEAT"/>
    <property type="match status" value="1"/>
</dbReference>
<proteinExistence type="evidence at transcript level"/>
<feature type="chain" id="PRO_0000240650" description="Ankyrin repeat domain-containing protein 13C">
    <location>
        <begin position="1"/>
        <end position="509"/>
    </location>
</feature>
<feature type="repeat" description="ANK 1">
    <location>
        <begin position="79"/>
        <end position="110"/>
    </location>
</feature>
<feature type="repeat" description="ANK 2">
    <location>
        <begin position="111"/>
        <end position="140"/>
    </location>
</feature>
<feature type="repeat" description="ANK 3">
    <location>
        <begin position="144"/>
        <end position="173"/>
    </location>
</feature>
<feature type="region of interest" description="Disordered" evidence="2">
    <location>
        <begin position="1"/>
        <end position="42"/>
    </location>
</feature>
<feature type="compositionally biased region" description="Basic and acidic residues" evidence="2">
    <location>
        <begin position="1"/>
        <end position="19"/>
    </location>
</feature>
<sequence>MTGEKIRSLHRDQKPSKDEDLLEPDEEATAGGTFTRTGKLKNSKMFSNHKVIRSPSNPALLQNHHQQISPITPGESKTDAYFPVHECVFKGDIRRLSSLIRSHSIGQKDNHGNTPLHLAVMLGNKECAHLLLAHNAPVKVKNAQGWSPLAEAISYGDRQMITALLRKLKQQSRESVEEKRPRLLKALKELGDFYLELHWDFQSWVPLLSRILPSDACKIYKQGINIRLDTTLIDFTDMKCQRGDLSFIFNGDAAPSESFVVLDNEQKVYQRIHHEESEMETEEEVDILMSSDIYSATLSTKSISFTRAQTGWLFREDKTERVGNFLADFHLVNGLILESRKRREHLTEEDILRNKAIMESLSKGGNLMEQNFEPVRRQSLTPPPPNTITWEEYISAENGKAPHLGRELVCKENKKTFKATIAMSQDFPLGIESLLNVLEVIAPFKHFNKLREFVQMKLPPGFPVKLDIPVFPTITATVTFQEFRYGEFEDAIFTIPDDYKEDPSRFPDL</sequence>
<comment type="function">
    <text evidence="1">Acts as a molecular chaperone for G protein-coupled receptors, regulating their biogenesis and exit from the ER.</text>
</comment>
<comment type="subcellular location">
    <subcellularLocation>
        <location evidence="1">Endoplasmic reticulum membrane</location>
    </subcellularLocation>
    <text evidence="1">Associated with the cytosolic side.</text>
</comment>
<accession>Q28C34</accession>
<accession>Q0IHL1</accession>
<keyword id="KW-0040">ANK repeat</keyword>
<keyword id="KW-0143">Chaperone</keyword>
<keyword id="KW-0256">Endoplasmic reticulum</keyword>
<keyword id="KW-0472">Membrane</keyword>
<keyword id="KW-1185">Reference proteome</keyword>
<keyword id="KW-0677">Repeat</keyword>
<reference key="1">
    <citation type="submission" date="2006-03" db="EMBL/GenBank/DDBJ databases">
        <authorList>
            <consortium name="Sanger Xenopus tropicalis EST/cDNA project"/>
        </authorList>
    </citation>
    <scope>NUCLEOTIDE SEQUENCE [LARGE SCALE MRNA]</scope>
    <source>
        <tissue>Egg</tissue>
    </source>
</reference>
<reference key="2">
    <citation type="submission" date="2006-09" db="EMBL/GenBank/DDBJ databases">
        <authorList>
            <consortium name="NIH - Xenopus Gene Collection (XGC) project"/>
        </authorList>
    </citation>
    <scope>NUCLEOTIDE SEQUENCE [LARGE SCALE MRNA]</scope>
    <source>
        <strain>N6</strain>
        <tissue>Fat body</tissue>
    </source>
</reference>